<comment type="function">
    <text evidence="1">DNA-dependent RNA polymerase catalyzes the transcription of DNA into RNA using the four ribonucleoside triphosphates as substrates.</text>
</comment>
<comment type="catalytic activity">
    <reaction evidence="1">
        <text>RNA(n) + a ribonucleoside 5'-triphosphate = RNA(n+1) + diphosphate</text>
        <dbReference type="Rhea" id="RHEA:21248"/>
        <dbReference type="Rhea" id="RHEA-COMP:14527"/>
        <dbReference type="Rhea" id="RHEA-COMP:17342"/>
        <dbReference type="ChEBI" id="CHEBI:33019"/>
        <dbReference type="ChEBI" id="CHEBI:61557"/>
        <dbReference type="ChEBI" id="CHEBI:140395"/>
        <dbReference type="EC" id="2.7.7.6"/>
    </reaction>
</comment>
<comment type="subunit">
    <text evidence="1">Homodimer. The RNAP catalytic core consists of 2 alpha, 1 beta, 1 beta' and 1 omega subunit. When a sigma factor is associated with the core the holoenzyme is formed, which can initiate transcription.</text>
</comment>
<comment type="domain">
    <text evidence="1">The N-terminal domain is essential for RNAP assembly and basal transcription, whereas the C-terminal domain is involved in interaction with transcriptional regulators and with upstream promoter elements.</text>
</comment>
<comment type="similarity">
    <text evidence="1">Belongs to the RNA polymerase alpha chain family.</text>
</comment>
<name>RPOA_BURTA</name>
<dbReference type="EC" id="2.7.7.6" evidence="1"/>
<dbReference type="EMBL" id="CP000086">
    <property type="protein sequence ID" value="ABC38472.1"/>
    <property type="molecule type" value="Genomic_DNA"/>
</dbReference>
<dbReference type="RefSeq" id="WP_009888441.1">
    <property type="nucleotide sequence ID" value="NZ_CP008786.1"/>
</dbReference>
<dbReference type="SMR" id="Q2SU53"/>
<dbReference type="KEGG" id="bte:BTH_I3042"/>
<dbReference type="HOGENOM" id="CLU_053084_0_0_4"/>
<dbReference type="Proteomes" id="UP000001930">
    <property type="component" value="Chromosome I"/>
</dbReference>
<dbReference type="GO" id="GO:0005737">
    <property type="term" value="C:cytoplasm"/>
    <property type="evidence" value="ECO:0007669"/>
    <property type="project" value="UniProtKB-ARBA"/>
</dbReference>
<dbReference type="GO" id="GO:0000428">
    <property type="term" value="C:DNA-directed RNA polymerase complex"/>
    <property type="evidence" value="ECO:0007669"/>
    <property type="project" value="UniProtKB-KW"/>
</dbReference>
<dbReference type="GO" id="GO:0003677">
    <property type="term" value="F:DNA binding"/>
    <property type="evidence" value="ECO:0007669"/>
    <property type="project" value="UniProtKB-UniRule"/>
</dbReference>
<dbReference type="GO" id="GO:0003899">
    <property type="term" value="F:DNA-directed RNA polymerase activity"/>
    <property type="evidence" value="ECO:0007669"/>
    <property type="project" value="UniProtKB-UniRule"/>
</dbReference>
<dbReference type="GO" id="GO:0046983">
    <property type="term" value="F:protein dimerization activity"/>
    <property type="evidence" value="ECO:0007669"/>
    <property type="project" value="InterPro"/>
</dbReference>
<dbReference type="GO" id="GO:0006351">
    <property type="term" value="P:DNA-templated transcription"/>
    <property type="evidence" value="ECO:0007669"/>
    <property type="project" value="UniProtKB-UniRule"/>
</dbReference>
<dbReference type="CDD" id="cd06928">
    <property type="entry name" value="RNAP_alpha_NTD"/>
    <property type="match status" value="1"/>
</dbReference>
<dbReference type="FunFam" id="1.10.150.20:FF:000001">
    <property type="entry name" value="DNA-directed RNA polymerase subunit alpha"/>
    <property type="match status" value="1"/>
</dbReference>
<dbReference type="FunFam" id="2.170.120.12:FF:000001">
    <property type="entry name" value="DNA-directed RNA polymerase subunit alpha"/>
    <property type="match status" value="1"/>
</dbReference>
<dbReference type="Gene3D" id="1.10.150.20">
    <property type="entry name" value="5' to 3' exonuclease, C-terminal subdomain"/>
    <property type="match status" value="1"/>
</dbReference>
<dbReference type="Gene3D" id="2.170.120.12">
    <property type="entry name" value="DNA-directed RNA polymerase, insert domain"/>
    <property type="match status" value="1"/>
</dbReference>
<dbReference type="Gene3D" id="3.30.1360.10">
    <property type="entry name" value="RNA polymerase, RBP11-like subunit"/>
    <property type="match status" value="1"/>
</dbReference>
<dbReference type="HAMAP" id="MF_00059">
    <property type="entry name" value="RNApol_bact_RpoA"/>
    <property type="match status" value="1"/>
</dbReference>
<dbReference type="InterPro" id="IPR011262">
    <property type="entry name" value="DNA-dir_RNA_pol_insert"/>
</dbReference>
<dbReference type="InterPro" id="IPR011263">
    <property type="entry name" value="DNA-dir_RNA_pol_RpoA/D/Rpb3"/>
</dbReference>
<dbReference type="InterPro" id="IPR011773">
    <property type="entry name" value="DNA-dir_RpoA"/>
</dbReference>
<dbReference type="InterPro" id="IPR036603">
    <property type="entry name" value="RBP11-like"/>
</dbReference>
<dbReference type="InterPro" id="IPR011260">
    <property type="entry name" value="RNAP_asu_C"/>
</dbReference>
<dbReference type="InterPro" id="IPR036643">
    <property type="entry name" value="RNApol_insert_sf"/>
</dbReference>
<dbReference type="NCBIfam" id="NF003513">
    <property type="entry name" value="PRK05182.1-2"/>
    <property type="match status" value="1"/>
</dbReference>
<dbReference type="NCBIfam" id="NF003519">
    <property type="entry name" value="PRK05182.2-5"/>
    <property type="match status" value="1"/>
</dbReference>
<dbReference type="NCBIfam" id="TIGR02027">
    <property type="entry name" value="rpoA"/>
    <property type="match status" value="1"/>
</dbReference>
<dbReference type="Pfam" id="PF01000">
    <property type="entry name" value="RNA_pol_A_bac"/>
    <property type="match status" value="1"/>
</dbReference>
<dbReference type="Pfam" id="PF03118">
    <property type="entry name" value="RNA_pol_A_CTD"/>
    <property type="match status" value="1"/>
</dbReference>
<dbReference type="Pfam" id="PF01193">
    <property type="entry name" value="RNA_pol_L"/>
    <property type="match status" value="1"/>
</dbReference>
<dbReference type="SMART" id="SM00662">
    <property type="entry name" value="RPOLD"/>
    <property type="match status" value="1"/>
</dbReference>
<dbReference type="SUPFAM" id="SSF47789">
    <property type="entry name" value="C-terminal domain of RNA polymerase alpha subunit"/>
    <property type="match status" value="1"/>
</dbReference>
<dbReference type="SUPFAM" id="SSF56553">
    <property type="entry name" value="Insert subdomain of RNA polymerase alpha subunit"/>
    <property type="match status" value="1"/>
</dbReference>
<dbReference type="SUPFAM" id="SSF55257">
    <property type="entry name" value="RBP11-like subunits of RNA polymerase"/>
    <property type="match status" value="1"/>
</dbReference>
<gene>
    <name evidence="1" type="primary">rpoA</name>
    <name type="ordered locus">BTH_I3042</name>
</gene>
<accession>Q2SU53</accession>
<sequence>MQTSLLKPKIIAVESLGENHAKVVMEPFERGYGHTLGNALRRVLLSSMVGYAPTEVTIAGVVHEYSTLDGVQEDVVNLLLNLKGVVFKLHNRDEVTVTLRKEGEGVVTAGDIELAHDCEVINPNHVIAHLSKGGKLDVQIKVEKGRGYVPGNVRRYGDETAKIIGRIVLDASFSPVRRVSYAVESARVEQRTDLDKLVMNIETSGVITPEEAIRQSARILVDQLSVFAALEGTETAAEAPSRAPQIDPILLRPVDDLELTVRSANCLKAENIYYIGDLIQRTENELLKTPNLGRKSLNEIKEVLASRGLTLGMKLENWPPAGLDK</sequence>
<reference key="1">
    <citation type="journal article" date="2005" name="BMC Genomics">
        <title>Bacterial genome adaptation to niches: divergence of the potential virulence genes in three Burkholderia species of different survival strategies.</title>
        <authorList>
            <person name="Kim H.S."/>
            <person name="Schell M.A."/>
            <person name="Yu Y."/>
            <person name="Ulrich R.L."/>
            <person name="Sarria S.H."/>
            <person name="Nierman W.C."/>
            <person name="DeShazer D."/>
        </authorList>
    </citation>
    <scope>NUCLEOTIDE SEQUENCE [LARGE SCALE GENOMIC DNA]</scope>
    <source>
        <strain>ATCC 700388 / DSM 13276 / CCUG 48851 / CIP 106301 / E264</strain>
    </source>
</reference>
<proteinExistence type="inferred from homology"/>
<organism>
    <name type="scientific">Burkholderia thailandensis (strain ATCC 700388 / DSM 13276 / CCUG 48851 / CIP 106301 / E264)</name>
    <dbReference type="NCBI Taxonomy" id="271848"/>
    <lineage>
        <taxon>Bacteria</taxon>
        <taxon>Pseudomonadati</taxon>
        <taxon>Pseudomonadota</taxon>
        <taxon>Betaproteobacteria</taxon>
        <taxon>Burkholderiales</taxon>
        <taxon>Burkholderiaceae</taxon>
        <taxon>Burkholderia</taxon>
        <taxon>pseudomallei group</taxon>
    </lineage>
</organism>
<evidence type="ECO:0000255" key="1">
    <source>
        <dbReference type="HAMAP-Rule" id="MF_00059"/>
    </source>
</evidence>
<feature type="chain" id="PRO_0000264488" description="DNA-directed RNA polymerase subunit alpha">
    <location>
        <begin position="1"/>
        <end position="325"/>
    </location>
</feature>
<feature type="region of interest" description="Alpha N-terminal domain (alpha-NTD)" evidence="1">
    <location>
        <begin position="1"/>
        <end position="231"/>
    </location>
</feature>
<feature type="region of interest" description="Alpha C-terminal domain (alpha-CTD)" evidence="1">
    <location>
        <begin position="246"/>
        <end position="325"/>
    </location>
</feature>
<protein>
    <recommendedName>
        <fullName evidence="1">DNA-directed RNA polymerase subunit alpha</fullName>
        <shortName evidence="1">RNAP subunit alpha</shortName>
        <ecNumber evidence="1">2.7.7.6</ecNumber>
    </recommendedName>
    <alternativeName>
        <fullName evidence="1">RNA polymerase subunit alpha</fullName>
    </alternativeName>
    <alternativeName>
        <fullName evidence="1">Transcriptase subunit alpha</fullName>
    </alternativeName>
</protein>
<keyword id="KW-0240">DNA-directed RNA polymerase</keyword>
<keyword id="KW-0548">Nucleotidyltransferase</keyword>
<keyword id="KW-0804">Transcription</keyword>
<keyword id="KW-0808">Transferase</keyword>